<gene>
    <name evidence="1" type="primary">cshA</name>
    <name type="ordered locus">SAV2081</name>
</gene>
<evidence type="ECO:0000255" key="1">
    <source>
        <dbReference type="HAMAP-Rule" id="MF_01493"/>
    </source>
</evidence>
<evidence type="ECO:0000256" key="2">
    <source>
        <dbReference type="SAM" id="MobiDB-lite"/>
    </source>
</evidence>
<protein>
    <recommendedName>
        <fullName evidence="1">DEAD-box ATP-dependent RNA helicase CshA</fullName>
        <ecNumber evidence="1">3.6.4.13</ecNumber>
    </recommendedName>
</protein>
<proteinExistence type="evidence at protein level"/>
<keyword id="KW-0002">3D-structure</keyword>
<keyword id="KW-0067">ATP-binding</keyword>
<keyword id="KW-0963">Cytoplasm</keyword>
<keyword id="KW-0347">Helicase</keyword>
<keyword id="KW-0378">Hydrolase</keyword>
<keyword id="KW-0547">Nucleotide-binding</keyword>
<keyword id="KW-0694">RNA-binding</keyword>
<keyword id="KW-0346">Stress response</keyword>
<dbReference type="EC" id="3.6.4.13" evidence="1"/>
<dbReference type="EMBL" id="BA000017">
    <property type="protein sequence ID" value="BAB58243.1"/>
    <property type="molecule type" value="Genomic_DNA"/>
</dbReference>
<dbReference type="RefSeq" id="WP_001178942.1">
    <property type="nucleotide sequence ID" value="NC_002758.2"/>
</dbReference>
<dbReference type="PDB" id="6AIB">
    <property type="method" value="X-ray"/>
    <property type="resolution" value="1.50 A"/>
    <property type="chains" value="A=1-208"/>
</dbReference>
<dbReference type="PDB" id="6AIC">
    <property type="method" value="X-ray"/>
    <property type="resolution" value="1.80 A"/>
    <property type="chains" value="A=1-208"/>
</dbReference>
<dbReference type="PDBsum" id="6AIB"/>
<dbReference type="PDBsum" id="6AIC"/>
<dbReference type="SMR" id="Q99SH6"/>
<dbReference type="KEGG" id="sav:SAV2081"/>
<dbReference type="HOGENOM" id="CLU_003041_21_1_9"/>
<dbReference type="PhylomeDB" id="Q99SH6"/>
<dbReference type="BRENDA" id="3.6.4.13">
    <property type="organism ID" value="3352"/>
</dbReference>
<dbReference type="Proteomes" id="UP000002481">
    <property type="component" value="Chromosome"/>
</dbReference>
<dbReference type="GO" id="GO:0005829">
    <property type="term" value="C:cytosol"/>
    <property type="evidence" value="ECO:0007669"/>
    <property type="project" value="TreeGrafter"/>
</dbReference>
<dbReference type="GO" id="GO:0005840">
    <property type="term" value="C:ribosome"/>
    <property type="evidence" value="ECO:0007669"/>
    <property type="project" value="TreeGrafter"/>
</dbReference>
<dbReference type="GO" id="GO:0005524">
    <property type="term" value="F:ATP binding"/>
    <property type="evidence" value="ECO:0007669"/>
    <property type="project" value="UniProtKB-UniRule"/>
</dbReference>
<dbReference type="GO" id="GO:0016887">
    <property type="term" value="F:ATP hydrolysis activity"/>
    <property type="evidence" value="ECO:0007669"/>
    <property type="project" value="RHEA"/>
</dbReference>
<dbReference type="GO" id="GO:0003724">
    <property type="term" value="F:RNA helicase activity"/>
    <property type="evidence" value="ECO:0007669"/>
    <property type="project" value="UniProtKB-UniRule"/>
</dbReference>
<dbReference type="GO" id="GO:0033592">
    <property type="term" value="F:RNA strand annealing activity"/>
    <property type="evidence" value="ECO:0007669"/>
    <property type="project" value="TreeGrafter"/>
</dbReference>
<dbReference type="GO" id="GO:0009409">
    <property type="term" value="P:response to cold"/>
    <property type="evidence" value="ECO:0007669"/>
    <property type="project" value="TreeGrafter"/>
</dbReference>
<dbReference type="GO" id="GO:0006401">
    <property type="term" value="P:RNA catabolic process"/>
    <property type="evidence" value="ECO:0007669"/>
    <property type="project" value="UniProtKB-UniRule"/>
</dbReference>
<dbReference type="CDD" id="cd00268">
    <property type="entry name" value="DEADc"/>
    <property type="match status" value="1"/>
</dbReference>
<dbReference type="CDD" id="cd18787">
    <property type="entry name" value="SF2_C_DEAD"/>
    <property type="match status" value="1"/>
</dbReference>
<dbReference type="FunFam" id="3.40.50.300:FF:000108">
    <property type="entry name" value="ATP-dependent RNA helicase RhlE"/>
    <property type="match status" value="1"/>
</dbReference>
<dbReference type="Gene3D" id="3.40.50.300">
    <property type="entry name" value="P-loop containing nucleotide triphosphate hydrolases"/>
    <property type="match status" value="2"/>
</dbReference>
<dbReference type="HAMAP" id="MF_01493">
    <property type="entry name" value="DEAD_helicase_CshA"/>
    <property type="match status" value="1"/>
</dbReference>
<dbReference type="InterPro" id="IPR011545">
    <property type="entry name" value="DEAD/DEAH_box_helicase_dom"/>
</dbReference>
<dbReference type="InterPro" id="IPR050547">
    <property type="entry name" value="DEAD_box_RNA_helicases"/>
</dbReference>
<dbReference type="InterPro" id="IPR030880">
    <property type="entry name" value="DEAD_helicase_CshA"/>
</dbReference>
<dbReference type="InterPro" id="IPR014001">
    <property type="entry name" value="Helicase_ATP-bd"/>
</dbReference>
<dbReference type="InterPro" id="IPR001650">
    <property type="entry name" value="Helicase_C-like"/>
</dbReference>
<dbReference type="InterPro" id="IPR027417">
    <property type="entry name" value="P-loop_NTPase"/>
</dbReference>
<dbReference type="InterPro" id="IPR000629">
    <property type="entry name" value="RNA-helicase_DEAD-box_CS"/>
</dbReference>
<dbReference type="InterPro" id="IPR014014">
    <property type="entry name" value="RNA_helicase_DEAD_Q_motif"/>
</dbReference>
<dbReference type="PANTHER" id="PTHR47963">
    <property type="entry name" value="DEAD-BOX ATP-DEPENDENT RNA HELICASE 47, MITOCHONDRIAL"/>
    <property type="match status" value="1"/>
</dbReference>
<dbReference type="PANTHER" id="PTHR47963:SF5">
    <property type="entry name" value="DEAD-BOX ATP-DEPENDENT RNA HELICASE CSHA"/>
    <property type="match status" value="1"/>
</dbReference>
<dbReference type="Pfam" id="PF00270">
    <property type="entry name" value="DEAD"/>
    <property type="match status" value="1"/>
</dbReference>
<dbReference type="Pfam" id="PF00271">
    <property type="entry name" value="Helicase_C"/>
    <property type="match status" value="1"/>
</dbReference>
<dbReference type="SMART" id="SM00487">
    <property type="entry name" value="DEXDc"/>
    <property type="match status" value="1"/>
</dbReference>
<dbReference type="SMART" id="SM00490">
    <property type="entry name" value="HELICc"/>
    <property type="match status" value="1"/>
</dbReference>
<dbReference type="SUPFAM" id="SSF52540">
    <property type="entry name" value="P-loop containing nucleoside triphosphate hydrolases"/>
    <property type="match status" value="1"/>
</dbReference>
<dbReference type="PROSITE" id="PS00039">
    <property type="entry name" value="DEAD_ATP_HELICASE"/>
    <property type="match status" value="1"/>
</dbReference>
<dbReference type="PROSITE" id="PS51192">
    <property type="entry name" value="HELICASE_ATP_BIND_1"/>
    <property type="match status" value="1"/>
</dbReference>
<dbReference type="PROSITE" id="PS51194">
    <property type="entry name" value="HELICASE_CTER"/>
    <property type="match status" value="1"/>
</dbReference>
<dbReference type="PROSITE" id="PS51195">
    <property type="entry name" value="Q_MOTIF"/>
    <property type="match status" value="1"/>
</dbReference>
<reference key="1">
    <citation type="journal article" date="2001" name="Lancet">
        <title>Whole genome sequencing of meticillin-resistant Staphylococcus aureus.</title>
        <authorList>
            <person name="Kuroda M."/>
            <person name="Ohta T."/>
            <person name="Uchiyama I."/>
            <person name="Baba T."/>
            <person name="Yuzawa H."/>
            <person name="Kobayashi I."/>
            <person name="Cui L."/>
            <person name="Oguchi A."/>
            <person name="Aoki K."/>
            <person name="Nagai Y."/>
            <person name="Lian J.-Q."/>
            <person name="Ito T."/>
            <person name="Kanamori M."/>
            <person name="Matsumaru H."/>
            <person name="Maruyama A."/>
            <person name="Murakami H."/>
            <person name="Hosoyama A."/>
            <person name="Mizutani-Ui Y."/>
            <person name="Takahashi N.K."/>
            <person name="Sawano T."/>
            <person name="Inoue R."/>
            <person name="Kaito C."/>
            <person name="Sekimizu K."/>
            <person name="Hirakawa H."/>
            <person name="Kuhara S."/>
            <person name="Goto S."/>
            <person name="Yabuzaki J."/>
            <person name="Kanehisa M."/>
            <person name="Yamashita A."/>
            <person name="Oshima K."/>
            <person name="Furuya K."/>
            <person name="Yoshino C."/>
            <person name="Shiba T."/>
            <person name="Hattori M."/>
            <person name="Ogasawara N."/>
            <person name="Hayashi H."/>
            <person name="Hiramatsu K."/>
        </authorList>
    </citation>
    <scope>NUCLEOTIDE SEQUENCE [LARGE SCALE GENOMIC DNA]</scope>
    <source>
        <strain>Mu50 / ATCC 700699</strain>
    </source>
</reference>
<name>CSHA_STAAM</name>
<accession>Q99SH6</accession>
<comment type="function">
    <text evidence="1">DEAD-box RNA helicase possibly involved in RNA degradation. Unwinds dsRNA in both 5'- and 3'-directions, has RNA-dependent ATPase activity.</text>
</comment>
<comment type="catalytic activity">
    <reaction evidence="1">
        <text>ATP + H2O = ADP + phosphate + H(+)</text>
        <dbReference type="Rhea" id="RHEA:13065"/>
        <dbReference type="ChEBI" id="CHEBI:15377"/>
        <dbReference type="ChEBI" id="CHEBI:15378"/>
        <dbReference type="ChEBI" id="CHEBI:30616"/>
        <dbReference type="ChEBI" id="CHEBI:43474"/>
        <dbReference type="ChEBI" id="CHEBI:456216"/>
        <dbReference type="EC" id="3.6.4.13"/>
    </reaction>
</comment>
<comment type="subunit">
    <text evidence="1">Oligomerizes, may be a member of the RNA degradosome.</text>
</comment>
<comment type="subcellular location">
    <subcellularLocation>
        <location evidence="1">Cytoplasm</location>
    </subcellularLocation>
</comment>
<comment type="similarity">
    <text evidence="1">Belongs to the DEAD box helicase family. CshA subfamily.</text>
</comment>
<sequence>MQNFKELGISDNTVQSLESMGFKEPTPIQKDSIPYALQGIDILGQAQTGTGKTGAFGIPLIEKVVGKQGVQSLILAPTRELAMQVAEQLREFSRGQGVQVVTVFGGMPIERQIKALKKGPQIVVGTPGRVIDHLNRRTLKTDGIHTLILDEADEMMNMGFIDDMRFIMDKIPAVQRQTMLFSATMPKAIQALVQQFMKSPKIIKTMNNEMSDPQIEEFYTIVKELEKFDTFTNFLDVHQPELAIVFGRTKRRVDELTSALISKGYKAEGLHGDITQAKRLEVLKKFKNDQINILVATDVAARGLDISGVSHVYNFDIPQDTESYTHRIGRTGRAGKEGIAVTFVNPIEMDYIRQIEDANGRKMSALRPPHRKEVLQAREDDIKEKVENWMSKESESRLKRISTELLNEYNDVDLVAALLQELVEANDEVEVQLTFEKPLSRKGRNGKPSGSRNRNSKRGNPKFDSKSKRSKGYSSKKKSTKKFDRKEKSSGGSRPMKGRTFADHQK</sequence>
<organism>
    <name type="scientific">Staphylococcus aureus (strain Mu50 / ATCC 700699)</name>
    <dbReference type="NCBI Taxonomy" id="158878"/>
    <lineage>
        <taxon>Bacteria</taxon>
        <taxon>Bacillati</taxon>
        <taxon>Bacillota</taxon>
        <taxon>Bacilli</taxon>
        <taxon>Bacillales</taxon>
        <taxon>Staphylococcaceae</taxon>
        <taxon>Staphylococcus</taxon>
    </lineage>
</organism>
<feature type="chain" id="PRO_0000284822" description="DEAD-box ATP-dependent RNA helicase CshA">
    <location>
        <begin position="1"/>
        <end position="506"/>
    </location>
</feature>
<feature type="domain" description="Helicase ATP-binding" evidence="1">
    <location>
        <begin position="33"/>
        <end position="203"/>
    </location>
</feature>
<feature type="domain" description="Helicase C-terminal" evidence="1">
    <location>
        <begin position="214"/>
        <end position="375"/>
    </location>
</feature>
<feature type="region of interest" description="Disordered" evidence="2">
    <location>
        <begin position="436"/>
        <end position="506"/>
    </location>
</feature>
<feature type="short sequence motif" description="Q motif">
    <location>
        <begin position="2"/>
        <end position="30"/>
    </location>
</feature>
<feature type="short sequence motif" description="DEAD box">
    <location>
        <begin position="150"/>
        <end position="153"/>
    </location>
</feature>
<feature type="compositionally biased region" description="Basic residues" evidence="2">
    <location>
        <begin position="468"/>
        <end position="480"/>
    </location>
</feature>
<feature type="binding site" evidence="1">
    <location>
        <begin position="46"/>
        <end position="53"/>
    </location>
    <ligand>
        <name>ATP</name>
        <dbReference type="ChEBI" id="CHEBI:30616"/>
    </ligand>
</feature>